<proteinExistence type="evidence at transcript level"/>
<protein>
    <recommendedName>
        <fullName evidence="4">Protein 4.2</fullName>
        <shortName evidence="4">P4.2</shortName>
    </recommendedName>
    <alternativeName>
        <fullName evidence="2">Erythrocyte membrane protein band 4.2</fullName>
        <shortName evidence="2">Erythrocyte protein 4.2</shortName>
    </alternativeName>
</protein>
<organism>
    <name type="scientific">Bos taurus</name>
    <name type="common">Bovine</name>
    <dbReference type="NCBI Taxonomy" id="9913"/>
    <lineage>
        <taxon>Eukaryota</taxon>
        <taxon>Metazoa</taxon>
        <taxon>Chordata</taxon>
        <taxon>Craniata</taxon>
        <taxon>Vertebrata</taxon>
        <taxon>Euteleostomi</taxon>
        <taxon>Mammalia</taxon>
        <taxon>Eutheria</taxon>
        <taxon>Laurasiatheria</taxon>
        <taxon>Artiodactyla</taxon>
        <taxon>Ruminantia</taxon>
        <taxon>Pecora</taxon>
        <taxon>Bovidae</taxon>
        <taxon>Bovinae</taxon>
        <taxon>Bos</taxon>
    </lineage>
</organism>
<keyword id="KW-1003">Cell membrane</keyword>
<keyword id="KW-0133">Cell shape</keyword>
<keyword id="KW-0963">Cytoplasm</keyword>
<keyword id="KW-0206">Cytoskeleton</keyword>
<keyword id="KW-0265">Erythrocyte maturation</keyword>
<keyword id="KW-0449">Lipoprotein</keyword>
<keyword id="KW-0472">Membrane</keyword>
<keyword id="KW-0519">Myristate</keyword>
<keyword id="KW-0597">Phosphoprotein</keyword>
<keyword id="KW-1185">Reference proteome</keyword>
<name>EPB42_BOVIN</name>
<evidence type="ECO:0000250" key="1"/>
<evidence type="ECO:0000250" key="2">
    <source>
        <dbReference type="UniProtKB" id="P16452"/>
    </source>
</evidence>
<evidence type="ECO:0000269" key="3">
    <source>
    </source>
</evidence>
<evidence type="ECO:0000305" key="4"/>
<evidence type="ECO:0000312" key="5">
    <source>
        <dbReference type="EMBL" id="AAC48854.1"/>
    </source>
</evidence>
<feature type="initiator methionine" description="Removed">
    <location>
        <position position="1"/>
    </location>
</feature>
<feature type="chain" id="PRO_0000213719" description="Protein 4.2">
    <location>
        <begin position="2"/>
        <end position="687"/>
    </location>
</feature>
<feature type="region of interest" description="Band 3 binding" evidence="1">
    <location>
        <begin position="31"/>
        <end position="39"/>
    </location>
</feature>
<feature type="modified residue" description="Phosphoserine" evidence="2">
    <location>
        <position position="247"/>
    </location>
</feature>
<feature type="lipid moiety-binding region" description="N-myristoyl glycine" evidence="1">
    <location>
        <position position="2"/>
    </location>
</feature>
<feature type="sequence variant" evidence="3">
    <original>T</original>
    <variation>P</variation>
    <location>
        <position position="599"/>
    </location>
</feature>
<feature type="sequence variant" evidence="3">
    <original>I</original>
    <variation>M</variation>
    <location>
        <position position="601"/>
    </location>
</feature>
<feature type="sequence variant" evidence="3">
    <original>I</original>
    <variation>V</variation>
    <location>
        <position position="627"/>
    </location>
</feature>
<accession>O46510</accession>
<accession>O46509</accession>
<dbReference type="EMBL" id="AF030029">
    <property type="protein sequence ID" value="AAC48854.1"/>
    <property type="molecule type" value="mRNA"/>
</dbReference>
<dbReference type="EMBL" id="AF030030">
    <property type="protein sequence ID" value="AAC48855.1"/>
    <property type="molecule type" value="mRNA"/>
</dbReference>
<dbReference type="RefSeq" id="NP_776737.1">
    <property type="nucleotide sequence ID" value="NM_174312.2"/>
</dbReference>
<dbReference type="SMR" id="O46510"/>
<dbReference type="FunCoup" id="O46510">
    <property type="interactions" value="33"/>
</dbReference>
<dbReference type="STRING" id="9913.ENSBTAP00000035838"/>
<dbReference type="Ensembl" id="ENSBTAT00000035972.6">
    <property type="protein sequence ID" value="ENSBTAP00000035838.5"/>
    <property type="gene ID" value="ENSBTAG00000011439.7"/>
</dbReference>
<dbReference type="GeneID" id="281754"/>
<dbReference type="KEGG" id="bta:281754"/>
<dbReference type="CTD" id="2038"/>
<dbReference type="VEuPathDB" id="HostDB:ENSBTAG00000011439"/>
<dbReference type="VGNC" id="VGNC:28526">
    <property type="gene designation" value="EPB42"/>
</dbReference>
<dbReference type="GeneTree" id="ENSGT01050000244866"/>
<dbReference type="InParanoid" id="O46510"/>
<dbReference type="OMA" id="NPWGRED"/>
<dbReference type="OrthoDB" id="437511at2759"/>
<dbReference type="Proteomes" id="UP000009136">
    <property type="component" value="Chromosome 10"/>
</dbReference>
<dbReference type="Bgee" id="ENSBTAG00000011439">
    <property type="expression patterns" value="Expressed in oocyte and 17 other cell types or tissues"/>
</dbReference>
<dbReference type="GO" id="GO:0170014">
    <property type="term" value="C:ankyrin-1 complex"/>
    <property type="evidence" value="ECO:0000250"/>
    <property type="project" value="UniProtKB"/>
</dbReference>
<dbReference type="GO" id="GO:0005737">
    <property type="term" value="C:cytoplasm"/>
    <property type="evidence" value="ECO:0007669"/>
    <property type="project" value="UniProtKB-KW"/>
</dbReference>
<dbReference type="GO" id="GO:0005856">
    <property type="term" value="C:cytoskeleton"/>
    <property type="evidence" value="ECO:0007669"/>
    <property type="project" value="UniProtKB-SubCell"/>
</dbReference>
<dbReference type="GO" id="GO:0005886">
    <property type="term" value="C:plasma membrane"/>
    <property type="evidence" value="ECO:0007669"/>
    <property type="project" value="UniProtKB-SubCell"/>
</dbReference>
<dbReference type="GO" id="GO:0003810">
    <property type="term" value="F:protein-glutamine gamma-glutamyltransferase activity"/>
    <property type="evidence" value="ECO:0000318"/>
    <property type="project" value="GO_Central"/>
</dbReference>
<dbReference type="GO" id="GO:0043249">
    <property type="term" value="P:erythrocyte maturation"/>
    <property type="evidence" value="ECO:0007669"/>
    <property type="project" value="UniProtKB-KW"/>
</dbReference>
<dbReference type="GO" id="GO:0008360">
    <property type="term" value="P:regulation of cell shape"/>
    <property type="evidence" value="ECO:0007669"/>
    <property type="project" value="UniProtKB-KW"/>
</dbReference>
<dbReference type="FunFam" id="2.60.40.10:FF:001404">
    <property type="entry name" value="Erythrocyte membrane protein band 4.2"/>
    <property type="match status" value="1"/>
</dbReference>
<dbReference type="FunFam" id="2.60.40.10:FF:001480">
    <property type="entry name" value="Erythrocyte membrane protein band 4.2"/>
    <property type="match status" value="1"/>
</dbReference>
<dbReference type="FunFam" id="3.90.260.10:FF:000002">
    <property type="entry name" value="Erythrocyte membrane protein band 4.2"/>
    <property type="match status" value="1"/>
</dbReference>
<dbReference type="FunFam" id="2.60.40.10:FF:000090">
    <property type="entry name" value="Protein-glutamine gamma-glutamyltransferase 2"/>
    <property type="match status" value="1"/>
</dbReference>
<dbReference type="Gene3D" id="2.60.40.10">
    <property type="entry name" value="Immunoglobulins"/>
    <property type="match status" value="3"/>
</dbReference>
<dbReference type="Gene3D" id="3.90.260.10">
    <property type="entry name" value="Transglutaminase-like"/>
    <property type="match status" value="1"/>
</dbReference>
<dbReference type="InterPro" id="IPR013783">
    <property type="entry name" value="Ig-like_fold"/>
</dbReference>
<dbReference type="InterPro" id="IPR014756">
    <property type="entry name" value="Ig_E-set"/>
</dbReference>
<dbReference type="InterPro" id="IPR038765">
    <property type="entry name" value="Papain-like_cys_pep_sf"/>
</dbReference>
<dbReference type="InterPro" id="IPR050779">
    <property type="entry name" value="Transglutaminase"/>
</dbReference>
<dbReference type="InterPro" id="IPR002931">
    <property type="entry name" value="Transglutaminase-like"/>
</dbReference>
<dbReference type="InterPro" id="IPR036985">
    <property type="entry name" value="Transglutaminase-like_sf"/>
</dbReference>
<dbReference type="InterPro" id="IPR023608">
    <property type="entry name" value="Transglutaminase_animal"/>
</dbReference>
<dbReference type="InterPro" id="IPR013808">
    <property type="entry name" value="Transglutaminase_AS"/>
</dbReference>
<dbReference type="InterPro" id="IPR008958">
    <property type="entry name" value="Transglutaminase_C"/>
</dbReference>
<dbReference type="InterPro" id="IPR036238">
    <property type="entry name" value="Transglutaminase_C_sf"/>
</dbReference>
<dbReference type="InterPro" id="IPR001102">
    <property type="entry name" value="Transglutaminase_N"/>
</dbReference>
<dbReference type="PANTHER" id="PTHR11590:SF44">
    <property type="entry name" value="PROTEIN 4.2"/>
    <property type="match status" value="1"/>
</dbReference>
<dbReference type="PANTHER" id="PTHR11590">
    <property type="entry name" value="PROTEIN-GLUTAMINE GAMMA-GLUTAMYLTRANSFERASE"/>
    <property type="match status" value="1"/>
</dbReference>
<dbReference type="Pfam" id="PF00927">
    <property type="entry name" value="Transglut_C"/>
    <property type="match status" value="2"/>
</dbReference>
<dbReference type="Pfam" id="PF01841">
    <property type="entry name" value="Transglut_core"/>
    <property type="match status" value="1"/>
</dbReference>
<dbReference type="Pfam" id="PF00868">
    <property type="entry name" value="Transglut_N"/>
    <property type="match status" value="1"/>
</dbReference>
<dbReference type="PIRSF" id="PIRSF000459">
    <property type="entry name" value="TGM_EBP42"/>
    <property type="match status" value="1"/>
</dbReference>
<dbReference type="SMART" id="SM00460">
    <property type="entry name" value="TGc"/>
    <property type="match status" value="1"/>
</dbReference>
<dbReference type="SUPFAM" id="SSF54001">
    <property type="entry name" value="Cysteine proteinases"/>
    <property type="match status" value="1"/>
</dbReference>
<dbReference type="SUPFAM" id="SSF81296">
    <property type="entry name" value="E set domains"/>
    <property type="match status" value="1"/>
</dbReference>
<dbReference type="SUPFAM" id="SSF49309">
    <property type="entry name" value="Transglutaminase, two C-terminal domains"/>
    <property type="match status" value="2"/>
</dbReference>
<dbReference type="PROSITE" id="PS00547">
    <property type="entry name" value="TRANSGLUTAMINASES"/>
    <property type="match status" value="1"/>
</dbReference>
<sequence>MGQGLGIKSCDFQAARNNAEHHTNDISSQRLFVRRGQPFTISLHFQAPVHTFLRALKKVALIAQTGKQPSKANGTQATFSVSSLGDRKWWSAMVEERDDQSWTISVTTPADAIIGHYSLLLQISGRKQCLGQFTLLFNPWNREDAVFLGNEAQRKEYLLNQNGLIFLGTADCIQAEPWDFGQLEEDVIDLGLSLLTVDNQVEKWGNPVHVARVLGALLHILKEKSVLPTAKIQTTEERALLNKRRGSAPILRQWVTGHGRPVYEGQAWVLAAVACTVLRGLGIPARVVTTFTSAQGTGGDLLVNEYYNEEGLQNGEDNRGRAWIFQTSTECWMARPDLLEVYDGWQILYPSALKGGEVLEACDLVPVRAVKEGIVWLTPAASDIFASINASCVVWKCGEDGTLELTDSNTKYFGNNISTKNVDCDCHEDITQNYKYPEGSSQEKMVLEKVQKYRMKHKNDGIYPPCCETDDPLHLFLKAPSSLALGKNVEISVNLLNPTDQEKEVQLAIGLQAMYYNGVLAAKLWRKNFVLILSANSAKKISTSLFNSNFEQSLPENSFLRLTAMATHSSLPCFAQQDIAIRRPHLAIEMPETAEQHQTLIALVSIHNPLDVPLEDCVISIFGKGLIHREKSYRVNSVQPRNTLRTQLKFVPMKVGCQRLTVEMDCNMFQNLTNFRTVMVVAPKSPA</sequence>
<gene>
    <name evidence="2" type="primary">EPB42</name>
    <name evidence="5" type="synonym">BEP42</name>
</gene>
<reference key="1">
    <citation type="journal article" date="1998" name="Biochem. J.">
        <title>Molecular basis of bovine red-cell protein 4.2 polymorphism in Japanese black cattle.</title>
        <authorList>
            <person name="Matsumoto M."/>
            <person name="Inaba M."/>
            <person name="Ono K."/>
        </authorList>
    </citation>
    <scope>NUCLEOTIDE SEQUENCE [MRNA]</scope>
    <scope>VARIANTS PRO-599; MET-601 AND VAL-627</scope>
    <source>
        <strain>Japanese black</strain>
    </source>
</reference>
<comment type="function">
    <text evidence="2">Component of the ankyrin-1 complex, a multiprotein complex involved in the stability and shape of the erythrocyte membrane.</text>
</comment>
<comment type="subunit">
    <text evidence="2">Component of the ankyrin-1 complex in the erythrocyte, composed of ANK1, RHCE, RHAG, SLC4A1, EPB42, GYPA, GYPB and AQP1. Interacts with SLC4A1 (via the cytoplasmic domain); this interaction is mediated by the SLC4A1 Band 3-I dimer. Interacts with ANK1 (via ANK 1-13 repeats). Interacts with AQP1 (via the C-terminal).</text>
</comment>
<comment type="subcellular location">
    <subcellularLocation>
        <location evidence="1">Cell membrane</location>
        <topology evidence="1">Peripheral membrane protein</topology>
        <orientation evidence="1">Cytoplasmic side</orientation>
    </subcellularLocation>
    <subcellularLocation>
        <location evidence="1">Cytoplasm</location>
        <location evidence="1">Cytoskeleton</location>
    </subcellularLocation>
    <text evidence="1">Cytoplasmic surface of erythrocyte membranes.</text>
</comment>
<comment type="miscellaneous">
    <text>The substitution of an Ala for a Cys in the active site may be responsible for the lack of transglutaminase activity of band 4.2.</text>
</comment>
<comment type="similarity">
    <text evidence="4">Belongs to the transglutaminase superfamily. Transglutaminase family.</text>
</comment>